<proteinExistence type="inferred from homology"/>
<reference key="1">
    <citation type="journal article" date="2005" name="PLoS Genet.">
        <title>Life in hot carbon monoxide: the complete genome sequence of Carboxydothermus hydrogenoformans Z-2901.</title>
        <authorList>
            <person name="Wu M."/>
            <person name="Ren Q."/>
            <person name="Durkin A.S."/>
            <person name="Daugherty S.C."/>
            <person name="Brinkac L.M."/>
            <person name="Dodson R.J."/>
            <person name="Madupu R."/>
            <person name="Sullivan S.A."/>
            <person name="Kolonay J.F."/>
            <person name="Nelson W.C."/>
            <person name="Tallon L.J."/>
            <person name="Jones K.M."/>
            <person name="Ulrich L.E."/>
            <person name="Gonzalez J.M."/>
            <person name="Zhulin I.B."/>
            <person name="Robb F.T."/>
            <person name="Eisen J.A."/>
        </authorList>
    </citation>
    <scope>NUCLEOTIDE SEQUENCE [LARGE SCALE GENOMIC DNA]</scope>
    <source>
        <strain>ATCC BAA-161 / DSM 6008 / Z-2901</strain>
    </source>
</reference>
<name>RS12_CARHZ</name>
<protein>
    <recommendedName>
        <fullName evidence="2">Small ribosomal subunit protein uS12</fullName>
    </recommendedName>
    <alternativeName>
        <fullName evidence="3">30S ribosomal protein S12</fullName>
    </alternativeName>
</protein>
<comment type="function">
    <text evidence="2">With S4 and S5 plays an important role in translational accuracy.</text>
</comment>
<comment type="function">
    <text evidence="2">Interacts with and stabilizes bases of the 16S rRNA that are involved in tRNA selection in the A site and with the mRNA backbone. Located at the interface of the 30S and 50S subunits, it traverses the body of the 30S subunit contacting proteins on the other side and probably holding the rRNA structure together. The combined cluster of proteins S8, S12 and S17 appears to hold together the shoulder and platform of the 30S subunit.</text>
</comment>
<comment type="subunit">
    <text evidence="2">Part of the 30S ribosomal subunit. Contacts proteins S8 and S17. May interact with IF1 in the 30S initiation complex.</text>
</comment>
<comment type="similarity">
    <text evidence="2">Belongs to the universal ribosomal protein uS12 family.</text>
</comment>
<organism>
    <name type="scientific">Carboxydothermus hydrogenoformans (strain ATCC BAA-161 / DSM 6008 / Z-2901)</name>
    <dbReference type="NCBI Taxonomy" id="246194"/>
    <lineage>
        <taxon>Bacteria</taxon>
        <taxon>Bacillati</taxon>
        <taxon>Bacillota</taxon>
        <taxon>Clostridia</taxon>
        <taxon>Thermoanaerobacterales</taxon>
        <taxon>Thermoanaerobacteraceae</taxon>
        <taxon>Carboxydothermus</taxon>
    </lineage>
</organism>
<keyword id="KW-0488">Methylation</keyword>
<keyword id="KW-1185">Reference proteome</keyword>
<keyword id="KW-0687">Ribonucleoprotein</keyword>
<keyword id="KW-0689">Ribosomal protein</keyword>
<keyword id="KW-0694">RNA-binding</keyword>
<keyword id="KW-0699">rRNA-binding</keyword>
<keyword id="KW-0820">tRNA-binding</keyword>
<dbReference type="EMBL" id="CP000141">
    <property type="protein sequence ID" value="ABB15974.1"/>
    <property type="molecule type" value="Genomic_DNA"/>
</dbReference>
<dbReference type="RefSeq" id="WP_011345197.1">
    <property type="nucleotide sequence ID" value="NC_007503.1"/>
</dbReference>
<dbReference type="SMR" id="Q3A9R0"/>
<dbReference type="FunCoup" id="Q3A9R0">
    <property type="interactions" value="399"/>
</dbReference>
<dbReference type="STRING" id="246194.CHY_2315"/>
<dbReference type="KEGG" id="chy:CHY_2315"/>
<dbReference type="eggNOG" id="COG0048">
    <property type="taxonomic scope" value="Bacteria"/>
</dbReference>
<dbReference type="HOGENOM" id="CLU_104295_1_2_9"/>
<dbReference type="InParanoid" id="Q3A9R0"/>
<dbReference type="OrthoDB" id="9802366at2"/>
<dbReference type="Proteomes" id="UP000002706">
    <property type="component" value="Chromosome"/>
</dbReference>
<dbReference type="GO" id="GO:0015935">
    <property type="term" value="C:small ribosomal subunit"/>
    <property type="evidence" value="ECO:0007669"/>
    <property type="project" value="InterPro"/>
</dbReference>
<dbReference type="GO" id="GO:0019843">
    <property type="term" value="F:rRNA binding"/>
    <property type="evidence" value="ECO:0007669"/>
    <property type="project" value="UniProtKB-UniRule"/>
</dbReference>
<dbReference type="GO" id="GO:0003735">
    <property type="term" value="F:structural constituent of ribosome"/>
    <property type="evidence" value="ECO:0007669"/>
    <property type="project" value="InterPro"/>
</dbReference>
<dbReference type="GO" id="GO:0000049">
    <property type="term" value="F:tRNA binding"/>
    <property type="evidence" value="ECO:0007669"/>
    <property type="project" value="UniProtKB-UniRule"/>
</dbReference>
<dbReference type="GO" id="GO:0006412">
    <property type="term" value="P:translation"/>
    <property type="evidence" value="ECO:0007669"/>
    <property type="project" value="UniProtKB-UniRule"/>
</dbReference>
<dbReference type="CDD" id="cd03368">
    <property type="entry name" value="Ribosomal_S12"/>
    <property type="match status" value="1"/>
</dbReference>
<dbReference type="FunFam" id="2.40.50.140:FF:000001">
    <property type="entry name" value="30S ribosomal protein S12"/>
    <property type="match status" value="1"/>
</dbReference>
<dbReference type="Gene3D" id="2.40.50.140">
    <property type="entry name" value="Nucleic acid-binding proteins"/>
    <property type="match status" value="1"/>
</dbReference>
<dbReference type="HAMAP" id="MF_00403_B">
    <property type="entry name" value="Ribosomal_uS12_B"/>
    <property type="match status" value="1"/>
</dbReference>
<dbReference type="InterPro" id="IPR012340">
    <property type="entry name" value="NA-bd_OB-fold"/>
</dbReference>
<dbReference type="InterPro" id="IPR006032">
    <property type="entry name" value="Ribosomal_uS12"/>
</dbReference>
<dbReference type="InterPro" id="IPR005679">
    <property type="entry name" value="Ribosomal_uS12_bac"/>
</dbReference>
<dbReference type="NCBIfam" id="TIGR00981">
    <property type="entry name" value="rpsL_bact"/>
    <property type="match status" value="1"/>
</dbReference>
<dbReference type="PANTHER" id="PTHR11652">
    <property type="entry name" value="30S RIBOSOMAL PROTEIN S12 FAMILY MEMBER"/>
    <property type="match status" value="1"/>
</dbReference>
<dbReference type="Pfam" id="PF00164">
    <property type="entry name" value="Ribosom_S12_S23"/>
    <property type="match status" value="1"/>
</dbReference>
<dbReference type="PIRSF" id="PIRSF002133">
    <property type="entry name" value="Ribosomal_S12/S23"/>
    <property type="match status" value="1"/>
</dbReference>
<dbReference type="PRINTS" id="PR01034">
    <property type="entry name" value="RIBOSOMALS12"/>
</dbReference>
<dbReference type="SUPFAM" id="SSF50249">
    <property type="entry name" value="Nucleic acid-binding proteins"/>
    <property type="match status" value="1"/>
</dbReference>
<dbReference type="PROSITE" id="PS00055">
    <property type="entry name" value="RIBOSOMAL_S12"/>
    <property type="match status" value="1"/>
</dbReference>
<evidence type="ECO:0000250" key="1"/>
<evidence type="ECO:0000255" key="2">
    <source>
        <dbReference type="HAMAP-Rule" id="MF_00403"/>
    </source>
</evidence>
<evidence type="ECO:0000305" key="3"/>
<feature type="chain" id="PRO_0000226381" description="Small ribosomal subunit protein uS12">
    <location>
        <begin position="1"/>
        <end position="126"/>
    </location>
</feature>
<feature type="modified residue" description="3-methylthioaspartic acid" evidence="1">
    <location>
        <position position="89"/>
    </location>
</feature>
<sequence length="126" mass="13767">MPTINQLVRKGREKVAVKSSAPALKGCPQKRGVCTRVYTTTPKKPNSALRKVARVRLTNGIEVTAYIGGIGHNLQEHSVVLVRGGRVKDLPGVRYHIVRGALDCAGVQNRNQGRSKYGTKRPKAKK</sequence>
<accession>Q3A9R0</accession>
<gene>
    <name evidence="2" type="primary">rpsL</name>
    <name type="ordered locus">CHY_2315</name>
</gene>